<comment type="function">
    <text evidence="1">Bifunctional enzyme that catalyzes both the deamination of dCTP to dUTP and the hydrolysis of dUTP to dUMP without releasing the toxic dUTP intermediate.</text>
</comment>
<comment type="catalytic activity">
    <reaction evidence="1">
        <text>dCTP + 2 H2O = dUMP + NH4(+) + diphosphate</text>
        <dbReference type="Rhea" id="RHEA:19205"/>
        <dbReference type="ChEBI" id="CHEBI:15377"/>
        <dbReference type="ChEBI" id="CHEBI:28938"/>
        <dbReference type="ChEBI" id="CHEBI:33019"/>
        <dbReference type="ChEBI" id="CHEBI:61481"/>
        <dbReference type="ChEBI" id="CHEBI:246422"/>
        <dbReference type="EC" id="3.5.4.30"/>
    </reaction>
</comment>
<comment type="pathway">
    <text evidence="1">Pyrimidine metabolism; dUMP biosynthesis; dUMP from dCTP: step 1/1.</text>
</comment>
<comment type="subunit">
    <text evidence="1">Homotrimer.</text>
</comment>
<comment type="similarity">
    <text evidence="1">Belongs to the dCTP deaminase family.</text>
</comment>
<accession>Q97N13</accession>
<sequence>MILSGKQIKDSLGKDIVIEPFNEKQINPNSYNLKLHNELLVYDEEVLDMKKPNKTKKLIIPEEGIVLEPRKLYLGRTLEYTETDKYVPMLEGRSSIGRLGVFIHVTAGFGDVGFKGYWTLEIFCVEPIRIYSGVEICQIYYHDVGGDYEKYSSGKYQNNKGIQPSLLYKDFIN</sequence>
<evidence type="ECO:0000255" key="1">
    <source>
        <dbReference type="HAMAP-Rule" id="MF_00146"/>
    </source>
</evidence>
<keyword id="KW-0378">Hydrolase</keyword>
<keyword id="KW-0546">Nucleotide metabolism</keyword>
<keyword id="KW-0547">Nucleotide-binding</keyword>
<keyword id="KW-1185">Reference proteome</keyword>
<dbReference type="EC" id="3.5.4.30" evidence="1"/>
<dbReference type="EMBL" id="AE001437">
    <property type="protein sequence ID" value="AAK78012.1"/>
    <property type="molecule type" value="Genomic_DNA"/>
</dbReference>
<dbReference type="PIR" id="A96903">
    <property type="entry name" value="A96903"/>
</dbReference>
<dbReference type="RefSeq" id="NP_346672.1">
    <property type="nucleotide sequence ID" value="NC_003030.1"/>
</dbReference>
<dbReference type="RefSeq" id="WP_010963354.1">
    <property type="nucleotide sequence ID" value="NC_003030.1"/>
</dbReference>
<dbReference type="SMR" id="Q97N13"/>
<dbReference type="STRING" id="272562.CA_C0025"/>
<dbReference type="GeneID" id="44996506"/>
<dbReference type="KEGG" id="cac:CA_C0025"/>
<dbReference type="PATRIC" id="fig|272562.8.peg.204"/>
<dbReference type="eggNOG" id="COG0717">
    <property type="taxonomic scope" value="Bacteria"/>
</dbReference>
<dbReference type="HOGENOM" id="CLU_087476_0_1_9"/>
<dbReference type="OrthoDB" id="9780202at2"/>
<dbReference type="UniPathway" id="UPA00610">
    <property type="reaction ID" value="UER00667"/>
</dbReference>
<dbReference type="Proteomes" id="UP000000814">
    <property type="component" value="Chromosome"/>
</dbReference>
<dbReference type="GO" id="GO:0033973">
    <property type="term" value="F:dCTP deaminase (dUMP-forming) activity"/>
    <property type="evidence" value="ECO:0007669"/>
    <property type="project" value="UniProtKB-UniRule"/>
</dbReference>
<dbReference type="GO" id="GO:0008829">
    <property type="term" value="F:dCTP deaminase activity"/>
    <property type="evidence" value="ECO:0007669"/>
    <property type="project" value="InterPro"/>
</dbReference>
<dbReference type="GO" id="GO:0000166">
    <property type="term" value="F:nucleotide binding"/>
    <property type="evidence" value="ECO:0007669"/>
    <property type="project" value="UniProtKB-KW"/>
</dbReference>
<dbReference type="GO" id="GO:0006226">
    <property type="term" value="P:dUMP biosynthetic process"/>
    <property type="evidence" value="ECO:0007669"/>
    <property type="project" value="UniProtKB-UniRule"/>
</dbReference>
<dbReference type="GO" id="GO:0006229">
    <property type="term" value="P:dUTP biosynthetic process"/>
    <property type="evidence" value="ECO:0007669"/>
    <property type="project" value="InterPro"/>
</dbReference>
<dbReference type="GO" id="GO:0015949">
    <property type="term" value="P:nucleobase-containing small molecule interconversion"/>
    <property type="evidence" value="ECO:0007669"/>
    <property type="project" value="TreeGrafter"/>
</dbReference>
<dbReference type="CDD" id="cd07557">
    <property type="entry name" value="trimeric_dUTPase"/>
    <property type="match status" value="1"/>
</dbReference>
<dbReference type="Gene3D" id="2.70.40.10">
    <property type="match status" value="1"/>
</dbReference>
<dbReference type="HAMAP" id="MF_00146">
    <property type="entry name" value="dCTP_deaminase"/>
    <property type="match status" value="1"/>
</dbReference>
<dbReference type="InterPro" id="IPR011962">
    <property type="entry name" value="dCTP_deaminase"/>
</dbReference>
<dbReference type="InterPro" id="IPR036157">
    <property type="entry name" value="dUTPase-like_sf"/>
</dbReference>
<dbReference type="InterPro" id="IPR033704">
    <property type="entry name" value="dUTPase_trimeric"/>
</dbReference>
<dbReference type="NCBIfam" id="TIGR02274">
    <property type="entry name" value="dCTP_deam"/>
    <property type="match status" value="1"/>
</dbReference>
<dbReference type="PANTHER" id="PTHR42680">
    <property type="entry name" value="DCTP DEAMINASE"/>
    <property type="match status" value="1"/>
</dbReference>
<dbReference type="PANTHER" id="PTHR42680:SF3">
    <property type="entry name" value="DCTP DEAMINASE"/>
    <property type="match status" value="1"/>
</dbReference>
<dbReference type="Pfam" id="PF22769">
    <property type="entry name" value="DCD"/>
    <property type="match status" value="1"/>
</dbReference>
<dbReference type="SUPFAM" id="SSF51283">
    <property type="entry name" value="dUTPase-like"/>
    <property type="match status" value="1"/>
</dbReference>
<proteinExistence type="inferred from homology"/>
<protein>
    <recommendedName>
        <fullName evidence="1">dCTP deaminase, dUMP-forming</fullName>
        <ecNumber evidence="1">3.5.4.30</ecNumber>
    </recommendedName>
    <alternativeName>
        <fullName evidence="1">Bifunctional dCTP deaminase:dUTPase</fullName>
    </alternativeName>
    <alternativeName>
        <fullName evidence="1">DCD-DUT</fullName>
    </alternativeName>
</protein>
<feature type="chain" id="PRO_0000155979" description="dCTP deaminase, dUMP-forming">
    <location>
        <begin position="1"/>
        <end position="173"/>
    </location>
</feature>
<feature type="active site" description="Proton donor/acceptor" evidence="1">
    <location>
        <position position="121"/>
    </location>
</feature>
<feature type="binding site" evidence="1">
    <location>
        <begin position="93"/>
        <end position="98"/>
    </location>
    <ligand>
        <name>dCTP</name>
        <dbReference type="ChEBI" id="CHEBI:61481"/>
    </ligand>
</feature>
<feature type="binding site" evidence="1">
    <location>
        <position position="111"/>
    </location>
    <ligand>
        <name>dCTP</name>
        <dbReference type="ChEBI" id="CHEBI:61481"/>
    </ligand>
</feature>
<feature type="binding site" evidence="1">
    <location>
        <begin position="119"/>
        <end position="121"/>
    </location>
    <ligand>
        <name>dCTP</name>
        <dbReference type="ChEBI" id="CHEBI:61481"/>
    </ligand>
</feature>
<feature type="binding site" evidence="1">
    <location>
        <position position="138"/>
    </location>
    <ligand>
        <name>dCTP</name>
        <dbReference type="ChEBI" id="CHEBI:61481"/>
    </ligand>
</feature>
<feature type="binding site" evidence="1">
    <location>
        <position position="151"/>
    </location>
    <ligand>
        <name>dCTP</name>
        <dbReference type="ChEBI" id="CHEBI:61481"/>
    </ligand>
</feature>
<feature type="site" description="Important for bifunctional activity" evidence="1">
    <location>
        <begin position="108"/>
        <end position="109"/>
    </location>
</feature>
<name>DCDB_CLOAB</name>
<reference key="1">
    <citation type="journal article" date="2001" name="J. Bacteriol.">
        <title>Genome sequence and comparative analysis of the solvent-producing bacterium Clostridium acetobutylicum.</title>
        <authorList>
            <person name="Noelling J."/>
            <person name="Breton G."/>
            <person name="Omelchenko M.V."/>
            <person name="Makarova K.S."/>
            <person name="Zeng Q."/>
            <person name="Gibson R."/>
            <person name="Lee H.M."/>
            <person name="Dubois J."/>
            <person name="Qiu D."/>
            <person name="Hitti J."/>
            <person name="Wolf Y.I."/>
            <person name="Tatusov R.L."/>
            <person name="Sabathe F."/>
            <person name="Doucette-Stamm L.A."/>
            <person name="Soucaille P."/>
            <person name="Daly M.J."/>
            <person name="Bennett G.N."/>
            <person name="Koonin E.V."/>
            <person name="Smith D.R."/>
        </authorList>
    </citation>
    <scope>NUCLEOTIDE SEQUENCE [LARGE SCALE GENOMIC DNA]</scope>
    <source>
        <strain>ATCC 824 / DSM 792 / JCM 1419 / IAM 19013 / LMG 5710 / NBRC 13948 / NRRL B-527 / VKM B-1787 / 2291 / W</strain>
    </source>
</reference>
<gene>
    <name evidence="1" type="primary">dcd</name>
    <name type="ordered locus">CA_C0025</name>
</gene>
<organism>
    <name type="scientific">Clostridium acetobutylicum (strain ATCC 824 / DSM 792 / JCM 1419 / IAM 19013 / LMG 5710 / NBRC 13948 / NRRL B-527 / VKM B-1787 / 2291 / W)</name>
    <dbReference type="NCBI Taxonomy" id="272562"/>
    <lineage>
        <taxon>Bacteria</taxon>
        <taxon>Bacillati</taxon>
        <taxon>Bacillota</taxon>
        <taxon>Clostridia</taxon>
        <taxon>Eubacteriales</taxon>
        <taxon>Clostridiaceae</taxon>
        <taxon>Clostridium</taxon>
    </lineage>
</organism>